<dbReference type="EC" id="4.2.3.-" evidence="6"/>
<dbReference type="EMBL" id="MN523653">
    <property type="protein sequence ID" value="QKE43662.1"/>
    <property type="molecule type" value="mRNA"/>
</dbReference>
<dbReference type="SMR" id="P9WEY6"/>
<dbReference type="GO" id="GO:0046872">
    <property type="term" value="F:metal ion binding"/>
    <property type="evidence" value="ECO:0007669"/>
    <property type="project" value="UniProtKB-KW"/>
</dbReference>
<dbReference type="GO" id="GO:0010333">
    <property type="term" value="F:terpene synthase activity"/>
    <property type="evidence" value="ECO:0007669"/>
    <property type="project" value="InterPro"/>
</dbReference>
<dbReference type="GO" id="GO:0046246">
    <property type="term" value="P:terpene biosynthetic process"/>
    <property type="evidence" value="ECO:0007669"/>
    <property type="project" value="UniProtKB-ARBA"/>
</dbReference>
<dbReference type="Gene3D" id="1.10.600.10">
    <property type="entry name" value="Farnesyl Diphosphate Synthase"/>
    <property type="match status" value="1"/>
</dbReference>
<dbReference type="InterPro" id="IPR008949">
    <property type="entry name" value="Isoprenoid_synthase_dom_sf"/>
</dbReference>
<dbReference type="InterPro" id="IPR034686">
    <property type="entry name" value="Terpene_cyclase-like_2"/>
</dbReference>
<dbReference type="PANTHER" id="PTHR35201:SF4">
    <property type="entry name" value="BETA-PINACENE SYNTHASE-RELATED"/>
    <property type="match status" value="1"/>
</dbReference>
<dbReference type="PANTHER" id="PTHR35201">
    <property type="entry name" value="TERPENE SYNTHASE"/>
    <property type="match status" value="1"/>
</dbReference>
<dbReference type="Pfam" id="PF19086">
    <property type="entry name" value="Terpene_syn_C_2"/>
    <property type="match status" value="1"/>
</dbReference>
<dbReference type="SUPFAM" id="SSF48576">
    <property type="entry name" value="Terpenoid synthases"/>
    <property type="match status" value="1"/>
</dbReference>
<comment type="function">
    <text evidence="3 6">Terpene synthase that may be involved in the production of volatile terpenoids (PubMed:31839833). Does not show detectable terpene products with either farnesyl diphosphate (FPP) or geranyl diphosphate (GPP) (PubMed:31839833). P.polycephalum has a unique biology and these volatile terpenoids could function in internal communication of P.polycephalum, to mark the territory that have been explored, or they may be involved in chemotaxis (Probable).</text>
</comment>
<comment type="cofactor">
    <cofactor evidence="2">
        <name>Mg(2+)</name>
        <dbReference type="ChEBI" id="CHEBI:18420"/>
    </cofactor>
</comment>
<comment type="domain">
    <text evidence="2">The 2 conserved active-site motifs D(D/E)XX(D/E) and NSE are required for coordinating the divalent metal ions that stabilize the PPi moiety of the substrate.</text>
</comment>
<comment type="domain">
    <text evidence="6">The C-terminal WxxxxxRY motif is frequently found in terpene synthases and is important to guide product formation.</text>
</comment>
<comment type="similarity">
    <text evidence="5">Belongs to the terpene synthase family.</text>
</comment>
<reference key="1">
    <citation type="journal article" date="2019" name="Beilstein J. Org. Chem.">
        <title>Emission and biosynthesis of volatile terpenoids from the plasmodial slime mold Physarum polycephalum.</title>
        <authorList>
            <person name="Chen X."/>
            <person name="Koellner T.G."/>
            <person name="Xiong W."/>
            <person name="Wei G."/>
            <person name="Chen F."/>
        </authorList>
    </citation>
    <scope>NUCLEOTIDE SEQUENCE [MRNA]</scope>
    <scope>DOMAIN</scope>
    <scope>FUNCTION</scope>
</reference>
<sequence length="347" mass="39958">MKKKTVLYKYPMMAQMSYDQQELLDQLPHLDFSHFHSAFKSGFNASINAMEEKALRNAALYFPAEDVKMLGDMGGLVARMFYKASDERGAVLLDIFVFAFITDDLLEKPELRRHNENYRKLQILILKLVRNESFPEKDYPEWRNLITFSRPIFSKFQNLASPTLFHRFAFQYQEYLQGVDWEASIRSPNPVPDIETCKHVKRHLSGGQVAFVLAEFSREIEVPIAVRAHPGMQKFCSLASDLASYDNDIFSLKKEVRDGVVCNTILFLYLHGITKSLQAAVDRVVHMRKQTEREIISLINDLPQFGRDNAVAQEYISAITRCIGGNFEWCSKSTRYHVASSLPHSKL</sequence>
<accession>P9WEY6</accession>
<keyword id="KW-0456">Lyase</keyword>
<keyword id="KW-0460">Magnesium</keyword>
<keyword id="KW-0479">Metal-binding</keyword>
<evidence type="ECO:0000250" key="1">
    <source>
        <dbReference type="UniProtKB" id="B5HDJ6"/>
    </source>
</evidence>
<evidence type="ECO:0000250" key="2">
    <source>
        <dbReference type="UniProtKB" id="Q9UR08"/>
    </source>
</evidence>
<evidence type="ECO:0000269" key="3">
    <source>
    </source>
</evidence>
<evidence type="ECO:0000303" key="4">
    <source>
    </source>
</evidence>
<evidence type="ECO:0000305" key="5"/>
<evidence type="ECO:0000305" key="6">
    <source>
    </source>
</evidence>
<proteinExistence type="evidence at transcript level"/>
<organism>
    <name type="scientific">Physarum polycephalum</name>
    <name type="common">Slime mold</name>
    <dbReference type="NCBI Taxonomy" id="5791"/>
    <lineage>
        <taxon>Eukaryota</taxon>
        <taxon>Amoebozoa</taxon>
        <taxon>Evosea</taxon>
        <taxon>Eumycetozoa</taxon>
        <taxon>Myxogastria</taxon>
        <taxon>Myxogastromycetidae</taxon>
        <taxon>Physariida</taxon>
        <taxon>Physaraceae</taxon>
        <taxon>Physarum</taxon>
    </lineage>
</organism>
<feature type="chain" id="PRO_0000452099" description="Terpene synthase 2">
    <location>
        <begin position="1"/>
        <end position="347"/>
    </location>
</feature>
<feature type="short sequence motif" description="D(D/E)XX(D/E) motif" evidence="6">
    <location>
        <begin position="103"/>
        <end position="107"/>
    </location>
</feature>
<feature type="short sequence motif" description="NSE motif" evidence="6">
    <location>
        <begin position="247"/>
        <end position="255"/>
    </location>
</feature>
<feature type="short sequence motif" description="WxxxxxRY motif" evidence="6">
    <location>
        <begin position="329"/>
        <end position="336"/>
    </location>
</feature>
<feature type="binding site" evidence="2">
    <location>
        <position position="103"/>
    </location>
    <ligand>
        <name>Mg(2+)</name>
        <dbReference type="ChEBI" id="CHEBI:18420"/>
        <label>1</label>
    </ligand>
</feature>
<feature type="binding site" evidence="2">
    <location>
        <position position="103"/>
    </location>
    <ligand>
        <name>Mg(2+)</name>
        <dbReference type="ChEBI" id="CHEBI:18420"/>
        <label>2</label>
    </ligand>
</feature>
<feature type="binding site" evidence="2">
    <location>
        <position position="247"/>
    </location>
    <ligand>
        <name>Mg(2+)</name>
        <dbReference type="ChEBI" id="CHEBI:18420"/>
        <label>3</label>
    </ligand>
</feature>
<feature type="binding site" evidence="2">
    <location>
        <position position="251"/>
    </location>
    <ligand>
        <name>Mg(2+)</name>
        <dbReference type="ChEBI" id="CHEBI:18420"/>
        <label>3</label>
    </ligand>
</feature>
<feature type="binding site" evidence="2">
    <location>
        <position position="255"/>
    </location>
    <ligand>
        <name>Mg(2+)</name>
        <dbReference type="ChEBI" id="CHEBI:18420"/>
        <label>3</label>
    </ligand>
</feature>
<feature type="site" description="Plays a critical role in the stabilization of intermediate cation" evidence="1">
    <location>
        <position position="100"/>
    </location>
</feature>
<protein>
    <recommendedName>
        <fullName evidence="4">Terpene synthase 2</fullName>
        <shortName evidence="4">TPS2</shortName>
        <ecNumber evidence="6">4.2.3.-</ecNumber>
    </recommendedName>
    <alternativeName>
        <fullName evidence="5">Terpene cyclase TPS2</fullName>
    </alternativeName>
</protein>
<gene>
    <name evidence="4" type="primary">TPS2</name>
</gene>
<name>TPS2_PHYPO</name>